<gene>
    <name evidence="1" type="primary">rpmI</name>
    <name type="ordered locus">Shal_2022</name>
</gene>
<comment type="similarity">
    <text evidence="1">Belongs to the bacterial ribosomal protein bL35 family.</text>
</comment>
<feature type="chain" id="PRO_1000081627" description="Large ribosomal subunit protein bL35">
    <location>
        <begin position="1"/>
        <end position="64"/>
    </location>
</feature>
<dbReference type="EMBL" id="CP000931">
    <property type="protein sequence ID" value="ABZ76583.1"/>
    <property type="molecule type" value="Genomic_DNA"/>
</dbReference>
<dbReference type="RefSeq" id="WP_012155497.1">
    <property type="nucleotide sequence ID" value="NC_010334.1"/>
</dbReference>
<dbReference type="SMR" id="B0TT22"/>
<dbReference type="STRING" id="458817.Shal_2022"/>
<dbReference type="KEGG" id="shl:Shal_2022"/>
<dbReference type="eggNOG" id="COG0291">
    <property type="taxonomic scope" value="Bacteria"/>
</dbReference>
<dbReference type="HOGENOM" id="CLU_169643_1_1_6"/>
<dbReference type="OrthoDB" id="47476at2"/>
<dbReference type="Proteomes" id="UP000001317">
    <property type="component" value="Chromosome"/>
</dbReference>
<dbReference type="GO" id="GO:0022625">
    <property type="term" value="C:cytosolic large ribosomal subunit"/>
    <property type="evidence" value="ECO:0007669"/>
    <property type="project" value="TreeGrafter"/>
</dbReference>
<dbReference type="GO" id="GO:0003735">
    <property type="term" value="F:structural constituent of ribosome"/>
    <property type="evidence" value="ECO:0007669"/>
    <property type="project" value="InterPro"/>
</dbReference>
<dbReference type="GO" id="GO:0006412">
    <property type="term" value="P:translation"/>
    <property type="evidence" value="ECO:0007669"/>
    <property type="project" value="UniProtKB-UniRule"/>
</dbReference>
<dbReference type="FunFam" id="4.10.410.60:FF:000001">
    <property type="entry name" value="50S ribosomal protein L35"/>
    <property type="match status" value="1"/>
</dbReference>
<dbReference type="Gene3D" id="4.10.410.60">
    <property type="match status" value="1"/>
</dbReference>
<dbReference type="HAMAP" id="MF_00514">
    <property type="entry name" value="Ribosomal_bL35"/>
    <property type="match status" value="1"/>
</dbReference>
<dbReference type="InterPro" id="IPR001706">
    <property type="entry name" value="Ribosomal_bL35"/>
</dbReference>
<dbReference type="InterPro" id="IPR021137">
    <property type="entry name" value="Ribosomal_bL35-like"/>
</dbReference>
<dbReference type="InterPro" id="IPR018265">
    <property type="entry name" value="Ribosomal_bL35_CS"/>
</dbReference>
<dbReference type="InterPro" id="IPR037229">
    <property type="entry name" value="Ribosomal_bL35_sf"/>
</dbReference>
<dbReference type="NCBIfam" id="TIGR00001">
    <property type="entry name" value="rpmI_bact"/>
    <property type="match status" value="1"/>
</dbReference>
<dbReference type="PANTHER" id="PTHR33343">
    <property type="entry name" value="54S RIBOSOMAL PROTEIN BL35M"/>
    <property type="match status" value="1"/>
</dbReference>
<dbReference type="PANTHER" id="PTHR33343:SF1">
    <property type="entry name" value="LARGE RIBOSOMAL SUBUNIT PROTEIN BL35M"/>
    <property type="match status" value="1"/>
</dbReference>
<dbReference type="Pfam" id="PF01632">
    <property type="entry name" value="Ribosomal_L35p"/>
    <property type="match status" value="1"/>
</dbReference>
<dbReference type="PRINTS" id="PR00064">
    <property type="entry name" value="RIBOSOMALL35"/>
</dbReference>
<dbReference type="SUPFAM" id="SSF143034">
    <property type="entry name" value="L35p-like"/>
    <property type="match status" value="1"/>
</dbReference>
<dbReference type="PROSITE" id="PS00936">
    <property type="entry name" value="RIBOSOMAL_L35"/>
    <property type="match status" value="1"/>
</dbReference>
<proteinExistence type="inferred from homology"/>
<keyword id="KW-0687">Ribonucleoprotein</keyword>
<keyword id="KW-0689">Ribosomal protein</keyword>
<accession>B0TT22</accession>
<name>RL35_SHEHH</name>
<organism>
    <name type="scientific">Shewanella halifaxensis (strain HAW-EB4)</name>
    <dbReference type="NCBI Taxonomy" id="458817"/>
    <lineage>
        <taxon>Bacteria</taxon>
        <taxon>Pseudomonadati</taxon>
        <taxon>Pseudomonadota</taxon>
        <taxon>Gammaproteobacteria</taxon>
        <taxon>Alteromonadales</taxon>
        <taxon>Shewanellaceae</taxon>
        <taxon>Shewanella</taxon>
    </lineage>
</organism>
<protein>
    <recommendedName>
        <fullName evidence="1">Large ribosomal subunit protein bL35</fullName>
    </recommendedName>
    <alternativeName>
        <fullName evidence="2">50S ribosomal protein L35</fullName>
    </alternativeName>
</protein>
<reference key="1">
    <citation type="submission" date="2008-01" db="EMBL/GenBank/DDBJ databases">
        <title>Complete sequence of Shewanella halifaxensis HAW-EB4.</title>
        <authorList>
            <consortium name="US DOE Joint Genome Institute"/>
            <person name="Copeland A."/>
            <person name="Lucas S."/>
            <person name="Lapidus A."/>
            <person name="Glavina del Rio T."/>
            <person name="Dalin E."/>
            <person name="Tice H."/>
            <person name="Bruce D."/>
            <person name="Goodwin L."/>
            <person name="Pitluck S."/>
            <person name="Sims D."/>
            <person name="Brettin T."/>
            <person name="Detter J.C."/>
            <person name="Han C."/>
            <person name="Kuske C.R."/>
            <person name="Schmutz J."/>
            <person name="Larimer F."/>
            <person name="Land M."/>
            <person name="Hauser L."/>
            <person name="Kyrpides N."/>
            <person name="Kim E."/>
            <person name="Zhao J.-S."/>
            <person name="Richardson P."/>
        </authorList>
    </citation>
    <scope>NUCLEOTIDE SEQUENCE [LARGE SCALE GENOMIC DNA]</scope>
    <source>
        <strain>HAW-EB4</strain>
    </source>
</reference>
<evidence type="ECO:0000255" key="1">
    <source>
        <dbReference type="HAMAP-Rule" id="MF_00514"/>
    </source>
</evidence>
<evidence type="ECO:0000305" key="2"/>
<sequence length="64" mass="7455">MPKMKTDKGVQKRFKKTANGFKRKQAHLRHILTKKSTKRKRHLRAKCQVAKSDVPAIARQLPYA</sequence>